<dbReference type="EC" id="2.1.2.10" evidence="1"/>
<dbReference type="EMBL" id="CR931997">
    <property type="protein sequence ID" value="CAI36362.1"/>
    <property type="molecule type" value="Genomic_DNA"/>
</dbReference>
<dbReference type="RefSeq" id="WP_005297046.1">
    <property type="nucleotide sequence ID" value="NC_007164.1"/>
</dbReference>
<dbReference type="SMR" id="Q4JXU5"/>
<dbReference type="STRING" id="306537.jk0210"/>
<dbReference type="GeneID" id="92737698"/>
<dbReference type="KEGG" id="cjk:jk0210"/>
<dbReference type="eggNOG" id="COG0404">
    <property type="taxonomic scope" value="Bacteria"/>
</dbReference>
<dbReference type="HOGENOM" id="CLU_007884_10_2_11"/>
<dbReference type="OrthoDB" id="9774591at2"/>
<dbReference type="Proteomes" id="UP000000545">
    <property type="component" value="Chromosome"/>
</dbReference>
<dbReference type="GO" id="GO:0005829">
    <property type="term" value="C:cytosol"/>
    <property type="evidence" value="ECO:0007669"/>
    <property type="project" value="TreeGrafter"/>
</dbReference>
<dbReference type="GO" id="GO:0005960">
    <property type="term" value="C:glycine cleavage complex"/>
    <property type="evidence" value="ECO:0007669"/>
    <property type="project" value="InterPro"/>
</dbReference>
<dbReference type="GO" id="GO:0004047">
    <property type="term" value="F:aminomethyltransferase activity"/>
    <property type="evidence" value="ECO:0007669"/>
    <property type="project" value="UniProtKB-UniRule"/>
</dbReference>
<dbReference type="GO" id="GO:0008483">
    <property type="term" value="F:transaminase activity"/>
    <property type="evidence" value="ECO:0007669"/>
    <property type="project" value="UniProtKB-KW"/>
</dbReference>
<dbReference type="GO" id="GO:0019464">
    <property type="term" value="P:glycine decarboxylation via glycine cleavage system"/>
    <property type="evidence" value="ECO:0007669"/>
    <property type="project" value="UniProtKB-UniRule"/>
</dbReference>
<dbReference type="FunFam" id="3.30.70.1400:FF:000001">
    <property type="entry name" value="Aminomethyltransferase"/>
    <property type="match status" value="1"/>
</dbReference>
<dbReference type="Gene3D" id="2.40.30.110">
    <property type="entry name" value="Aminomethyltransferase beta-barrel domains"/>
    <property type="match status" value="1"/>
</dbReference>
<dbReference type="Gene3D" id="3.30.70.1400">
    <property type="entry name" value="Aminomethyltransferase beta-barrel domains"/>
    <property type="match status" value="1"/>
</dbReference>
<dbReference type="Gene3D" id="4.10.1250.10">
    <property type="entry name" value="Aminomethyltransferase fragment"/>
    <property type="match status" value="1"/>
</dbReference>
<dbReference type="Gene3D" id="3.30.1360.120">
    <property type="entry name" value="Probable tRNA modification gtpase trme, domain 1"/>
    <property type="match status" value="1"/>
</dbReference>
<dbReference type="HAMAP" id="MF_00259">
    <property type="entry name" value="GcvT"/>
    <property type="match status" value="1"/>
</dbReference>
<dbReference type="InterPro" id="IPR006223">
    <property type="entry name" value="GCS_T"/>
</dbReference>
<dbReference type="InterPro" id="IPR022903">
    <property type="entry name" value="GCS_T_bac"/>
</dbReference>
<dbReference type="InterPro" id="IPR013977">
    <property type="entry name" value="GCST_C"/>
</dbReference>
<dbReference type="InterPro" id="IPR006222">
    <property type="entry name" value="GCV_T_N"/>
</dbReference>
<dbReference type="InterPro" id="IPR028896">
    <property type="entry name" value="GcvT/YgfZ/DmdA"/>
</dbReference>
<dbReference type="InterPro" id="IPR029043">
    <property type="entry name" value="GcvT/YgfZ_C"/>
</dbReference>
<dbReference type="InterPro" id="IPR027266">
    <property type="entry name" value="TrmE/GcvT_dom1"/>
</dbReference>
<dbReference type="NCBIfam" id="TIGR00528">
    <property type="entry name" value="gcvT"/>
    <property type="match status" value="1"/>
</dbReference>
<dbReference type="NCBIfam" id="NF001567">
    <property type="entry name" value="PRK00389.1"/>
    <property type="match status" value="1"/>
</dbReference>
<dbReference type="PANTHER" id="PTHR43757">
    <property type="entry name" value="AMINOMETHYLTRANSFERASE"/>
    <property type="match status" value="1"/>
</dbReference>
<dbReference type="PANTHER" id="PTHR43757:SF2">
    <property type="entry name" value="AMINOMETHYLTRANSFERASE, MITOCHONDRIAL"/>
    <property type="match status" value="1"/>
</dbReference>
<dbReference type="Pfam" id="PF01571">
    <property type="entry name" value="GCV_T"/>
    <property type="match status" value="1"/>
</dbReference>
<dbReference type="Pfam" id="PF08669">
    <property type="entry name" value="GCV_T_C"/>
    <property type="match status" value="1"/>
</dbReference>
<dbReference type="PIRSF" id="PIRSF006487">
    <property type="entry name" value="GcvT"/>
    <property type="match status" value="1"/>
</dbReference>
<dbReference type="SUPFAM" id="SSF101790">
    <property type="entry name" value="Aminomethyltransferase beta-barrel domain"/>
    <property type="match status" value="1"/>
</dbReference>
<dbReference type="SUPFAM" id="SSF103025">
    <property type="entry name" value="Folate-binding domain"/>
    <property type="match status" value="1"/>
</dbReference>
<name>GCST_CORJK</name>
<gene>
    <name evidence="1" type="primary">gcvT</name>
    <name type="ordered locus">jk0210</name>
</gene>
<keyword id="KW-0032">Aminotransferase</keyword>
<keyword id="KW-1185">Reference proteome</keyword>
<keyword id="KW-0808">Transferase</keyword>
<evidence type="ECO:0000255" key="1">
    <source>
        <dbReference type="HAMAP-Rule" id="MF_00259"/>
    </source>
</evidence>
<organism>
    <name type="scientific">Corynebacterium jeikeium (strain K411)</name>
    <dbReference type="NCBI Taxonomy" id="306537"/>
    <lineage>
        <taxon>Bacteria</taxon>
        <taxon>Bacillati</taxon>
        <taxon>Actinomycetota</taxon>
        <taxon>Actinomycetes</taxon>
        <taxon>Mycobacteriales</taxon>
        <taxon>Corynebacteriaceae</taxon>
        <taxon>Corynebacterium</taxon>
    </lineage>
</organism>
<proteinExistence type="inferred from homology"/>
<reference key="1">
    <citation type="journal article" date="2005" name="J. Bacteriol.">
        <title>Complete genome sequence and analysis of the multiresistant nosocomial pathogen Corynebacterium jeikeium K411, a lipid-requiring bacterium of the human skin flora.</title>
        <authorList>
            <person name="Tauch A."/>
            <person name="Kaiser O."/>
            <person name="Hain T."/>
            <person name="Goesmann A."/>
            <person name="Weisshaar B."/>
            <person name="Albersmeier A."/>
            <person name="Bekel T."/>
            <person name="Bischoff N."/>
            <person name="Brune I."/>
            <person name="Chakraborty T."/>
            <person name="Kalinowski J."/>
            <person name="Meyer F."/>
            <person name="Rupp O."/>
            <person name="Schneiker S."/>
            <person name="Viehoever P."/>
            <person name="Puehler A."/>
        </authorList>
    </citation>
    <scope>NUCLEOTIDE SEQUENCE [LARGE SCALE GENOMIC DNA]</scope>
    <source>
        <strain>K411</strain>
    </source>
</reference>
<feature type="chain" id="PRO_1000047660" description="Aminomethyltransferase">
    <location>
        <begin position="1"/>
        <end position="389"/>
    </location>
</feature>
<sequence>MTELKKTALHLVHEKLGARFTDFGGWDMPLKYSSELDEHHAVRNAVGVFDLSHMGEVRVTGPQAAEFLDHALISKLSAVKVGKAKYSMICTESGGIIDDLITYRLGDNEFLIVPNAGNVDNVVSALQGRTEGFDVEVNNESDATSMIAVQGPKAAQAMLEIVENVVDAPEASGAGETVAEAIEGLGYYAAFSGVAAGQPVLVARTGYTGEDGFELIVANDGAETVWTKAMDQAAQLGGLPCGLACRDTLRLEAGMPLYGNELSLKLTPVDAGLGILAATKSKDSFVGRDAIVSAKEKGTQQVLIGLAGEGRRAARGGYEVFAGDGEKAIGAVTSGALSPTLGHPVALAYVAKSAVSSGAAAEGATVEVDIRGKRFEYKVVALPFYSREK</sequence>
<comment type="function">
    <text evidence="1">The glycine cleavage system catalyzes the degradation of glycine.</text>
</comment>
<comment type="catalytic activity">
    <reaction evidence="1">
        <text>N(6)-[(R)-S(8)-aminomethyldihydrolipoyl]-L-lysyl-[protein] + (6S)-5,6,7,8-tetrahydrofolate = N(6)-[(R)-dihydrolipoyl]-L-lysyl-[protein] + (6R)-5,10-methylene-5,6,7,8-tetrahydrofolate + NH4(+)</text>
        <dbReference type="Rhea" id="RHEA:16945"/>
        <dbReference type="Rhea" id="RHEA-COMP:10475"/>
        <dbReference type="Rhea" id="RHEA-COMP:10492"/>
        <dbReference type="ChEBI" id="CHEBI:15636"/>
        <dbReference type="ChEBI" id="CHEBI:28938"/>
        <dbReference type="ChEBI" id="CHEBI:57453"/>
        <dbReference type="ChEBI" id="CHEBI:83100"/>
        <dbReference type="ChEBI" id="CHEBI:83143"/>
        <dbReference type="EC" id="2.1.2.10"/>
    </reaction>
</comment>
<comment type="subunit">
    <text evidence="1">The glycine cleavage system is composed of four proteins: P, T, L and H.</text>
</comment>
<comment type="similarity">
    <text evidence="1">Belongs to the GcvT family.</text>
</comment>
<accession>Q4JXU5</accession>
<protein>
    <recommendedName>
        <fullName evidence="1">Aminomethyltransferase</fullName>
        <ecNumber evidence="1">2.1.2.10</ecNumber>
    </recommendedName>
    <alternativeName>
        <fullName evidence="1">Glycine cleavage system T protein</fullName>
    </alternativeName>
</protein>